<name>TPIC_SECCE</name>
<proteinExistence type="evidence at protein level"/>
<feature type="transit peptide" description="Chloroplast" evidence="3">
    <location>
        <begin position="1"/>
        <end position="43"/>
    </location>
</feature>
<feature type="chain" id="PRO_0000035651" description="Triosephosphate isomerase, chloroplastic">
    <location>
        <begin position="44"/>
        <end position="298"/>
    </location>
</feature>
<feature type="region of interest" description="Disordered" evidence="2">
    <location>
        <begin position="1"/>
        <end position="32"/>
    </location>
</feature>
<feature type="compositionally biased region" description="Pro residues" evidence="2">
    <location>
        <begin position="1"/>
        <end position="18"/>
    </location>
</feature>
<feature type="compositionally biased region" description="Low complexity" evidence="2">
    <location>
        <begin position="19"/>
        <end position="32"/>
    </location>
</feature>
<feature type="active site" description="Electrophile" evidence="1">
    <location>
        <position position="138"/>
    </location>
</feature>
<feature type="active site" description="Proton acceptor" evidence="1">
    <location>
        <position position="208"/>
    </location>
</feature>
<feature type="binding site" evidence="1">
    <location>
        <position position="54"/>
    </location>
    <ligand>
        <name>substrate</name>
    </ligand>
</feature>
<feature type="binding site" evidence="1">
    <location>
        <position position="56"/>
    </location>
    <ligand>
        <name>substrate</name>
    </ligand>
</feature>
<feature type="modified residue" description="Cysteine derivative">
    <location>
        <position position="186"/>
    </location>
</feature>
<dbReference type="EC" id="5.3.1.1"/>
<dbReference type="EMBL" id="Z32521">
    <property type="protein sequence ID" value="CAA83533.1"/>
    <property type="molecule type" value="mRNA"/>
</dbReference>
<dbReference type="PIR" id="S53761">
    <property type="entry name" value="S53761"/>
</dbReference>
<dbReference type="SMR" id="P46225"/>
<dbReference type="ChEMBL" id="CHEMBL2366474"/>
<dbReference type="UniPathway" id="UPA00116"/>
<dbReference type="GO" id="GO:0009507">
    <property type="term" value="C:chloroplast"/>
    <property type="evidence" value="ECO:0007669"/>
    <property type="project" value="UniProtKB-SubCell"/>
</dbReference>
<dbReference type="GO" id="GO:0005829">
    <property type="term" value="C:cytosol"/>
    <property type="evidence" value="ECO:0007669"/>
    <property type="project" value="TreeGrafter"/>
</dbReference>
<dbReference type="GO" id="GO:0004807">
    <property type="term" value="F:triose-phosphate isomerase activity"/>
    <property type="evidence" value="ECO:0007669"/>
    <property type="project" value="UniProtKB-EC"/>
</dbReference>
<dbReference type="GO" id="GO:0006094">
    <property type="term" value="P:gluconeogenesis"/>
    <property type="evidence" value="ECO:0007669"/>
    <property type="project" value="TreeGrafter"/>
</dbReference>
<dbReference type="GO" id="GO:0046166">
    <property type="term" value="P:glyceraldehyde-3-phosphate biosynthetic process"/>
    <property type="evidence" value="ECO:0007669"/>
    <property type="project" value="TreeGrafter"/>
</dbReference>
<dbReference type="GO" id="GO:0019563">
    <property type="term" value="P:glycerol catabolic process"/>
    <property type="evidence" value="ECO:0007669"/>
    <property type="project" value="TreeGrafter"/>
</dbReference>
<dbReference type="GO" id="GO:0006096">
    <property type="term" value="P:glycolytic process"/>
    <property type="evidence" value="ECO:0007669"/>
    <property type="project" value="InterPro"/>
</dbReference>
<dbReference type="GO" id="GO:0019253">
    <property type="term" value="P:reductive pentose-phosphate cycle"/>
    <property type="evidence" value="ECO:0007669"/>
    <property type="project" value="UniProtKB-UniPathway"/>
</dbReference>
<dbReference type="CDD" id="cd00311">
    <property type="entry name" value="TIM"/>
    <property type="match status" value="1"/>
</dbReference>
<dbReference type="FunFam" id="3.20.20.70:FF:000025">
    <property type="entry name" value="Triosephosphate isomerase"/>
    <property type="match status" value="1"/>
</dbReference>
<dbReference type="Gene3D" id="3.20.20.70">
    <property type="entry name" value="Aldolase class I"/>
    <property type="match status" value="1"/>
</dbReference>
<dbReference type="HAMAP" id="MF_00147_B">
    <property type="entry name" value="TIM_B"/>
    <property type="match status" value="1"/>
</dbReference>
<dbReference type="InterPro" id="IPR013785">
    <property type="entry name" value="Aldolase_TIM"/>
</dbReference>
<dbReference type="InterPro" id="IPR035990">
    <property type="entry name" value="TIM_sf"/>
</dbReference>
<dbReference type="InterPro" id="IPR022896">
    <property type="entry name" value="TrioseP_Isoase_bac/euk"/>
</dbReference>
<dbReference type="InterPro" id="IPR000652">
    <property type="entry name" value="Triosephosphate_isomerase"/>
</dbReference>
<dbReference type="InterPro" id="IPR020861">
    <property type="entry name" value="Triosephosphate_isomerase_AS"/>
</dbReference>
<dbReference type="NCBIfam" id="TIGR00419">
    <property type="entry name" value="tim"/>
    <property type="match status" value="1"/>
</dbReference>
<dbReference type="PANTHER" id="PTHR21139">
    <property type="entry name" value="TRIOSEPHOSPHATE ISOMERASE"/>
    <property type="match status" value="1"/>
</dbReference>
<dbReference type="PANTHER" id="PTHR21139:SF2">
    <property type="entry name" value="TRIOSEPHOSPHATE ISOMERASE"/>
    <property type="match status" value="1"/>
</dbReference>
<dbReference type="Pfam" id="PF00121">
    <property type="entry name" value="TIM"/>
    <property type="match status" value="1"/>
</dbReference>
<dbReference type="SUPFAM" id="SSF51351">
    <property type="entry name" value="Triosephosphate isomerase (TIM)"/>
    <property type="match status" value="1"/>
</dbReference>
<dbReference type="PROSITE" id="PS00171">
    <property type="entry name" value="TIM_1"/>
    <property type="match status" value="1"/>
</dbReference>
<dbReference type="PROSITE" id="PS51440">
    <property type="entry name" value="TIM_2"/>
    <property type="match status" value="1"/>
</dbReference>
<sequence>MAARRPSPPPASPPPPRPRSTTTTRTTSSASAAPAAAQRLVAMAGSGKFFVGGNWKCNGTKESISKLVSDLNAATLESDVDVVVAPPFIYIDQVKSSLTDRIEVSAQNTWIGKGGAFTGEISAEQLVDIGCQWVILGHSERRHVIGEDDEFIGKKAAYALSQNLKVMACIGELLEEREAGKTFDVCFKQMKAFADNITDWTNVVIAYEPVWAIGTGKVASPEQAQEVHAAVRDWLKTNVSADVASTVRIIYGGSVNAANCAELAKKEDIDGFLVGGASLKGPDFATICNSVTSKKVTA</sequence>
<reference key="1">
    <citation type="journal article" date="1995" name="Biochim. Biophys. Acta">
        <title>Analysis of the primary structure of the chloroplast isozyme of triosephosphate isomerase from rye leaves by protein and cDNA sequencing indicates a eukaryotic origin of its gene.</title>
        <authorList>
            <person name="Schmidt M."/>
            <person name="Svendsen I."/>
            <person name="Feierabend J."/>
        </authorList>
    </citation>
    <scope>NUCLEOTIDE SEQUENCE [MRNA]</scope>
    <scope>PROTEIN SEQUENCE OF 44-297</scope>
    <source>
        <strain>cv. Halo</strain>
        <tissue>Leaf</tissue>
    </source>
</reference>
<protein>
    <recommendedName>
        <fullName>Triosephosphate isomerase, chloroplastic</fullName>
        <shortName>TIM</shortName>
        <shortName>Triose-phosphate isomerase</shortName>
        <ecNumber>5.3.1.1</ecNumber>
    </recommendedName>
</protein>
<accession>P46225</accession>
<keyword id="KW-0113">Calvin cycle</keyword>
<keyword id="KW-0150">Chloroplast</keyword>
<keyword id="KW-0903">Direct protein sequencing</keyword>
<keyword id="KW-0413">Isomerase</keyword>
<keyword id="KW-0934">Plastid</keyword>
<keyword id="KW-0809">Transit peptide</keyword>
<organism>
    <name type="scientific">Secale cereale</name>
    <name type="common">Rye</name>
    <dbReference type="NCBI Taxonomy" id="4550"/>
    <lineage>
        <taxon>Eukaryota</taxon>
        <taxon>Viridiplantae</taxon>
        <taxon>Streptophyta</taxon>
        <taxon>Embryophyta</taxon>
        <taxon>Tracheophyta</taxon>
        <taxon>Spermatophyta</taxon>
        <taxon>Magnoliopsida</taxon>
        <taxon>Liliopsida</taxon>
        <taxon>Poales</taxon>
        <taxon>Poaceae</taxon>
        <taxon>BOP clade</taxon>
        <taxon>Pooideae</taxon>
        <taxon>Triticodae</taxon>
        <taxon>Triticeae</taxon>
        <taxon>Hordeinae</taxon>
        <taxon>Secale</taxon>
    </lineage>
</organism>
<comment type="catalytic activity">
    <reaction>
        <text>D-glyceraldehyde 3-phosphate = dihydroxyacetone phosphate</text>
        <dbReference type="Rhea" id="RHEA:18585"/>
        <dbReference type="ChEBI" id="CHEBI:57642"/>
        <dbReference type="ChEBI" id="CHEBI:59776"/>
        <dbReference type="EC" id="5.3.1.1"/>
    </reaction>
</comment>
<comment type="pathway">
    <text>Carbohydrate biosynthesis; Calvin cycle.</text>
</comment>
<comment type="subunit">
    <text evidence="1">Homodimer.</text>
</comment>
<comment type="subcellular location">
    <subcellularLocation>
        <location>Plastid</location>
        <location>Chloroplast</location>
    </subcellularLocation>
</comment>
<comment type="miscellaneous">
    <text>In plants, there are two types of TPIS, cytosolic and plastid.</text>
</comment>
<comment type="similarity">
    <text evidence="4">Belongs to the triosephosphate isomerase family.</text>
</comment>
<evidence type="ECO:0000250" key="1"/>
<evidence type="ECO:0000256" key="2">
    <source>
        <dbReference type="SAM" id="MobiDB-lite"/>
    </source>
</evidence>
<evidence type="ECO:0000269" key="3">
    <source>
    </source>
</evidence>
<evidence type="ECO:0000305" key="4"/>